<accession>Q96GN5</accession>
<accession>A4D141</accession>
<accession>A6NF50</accession>
<accession>B3KTR5</accession>
<accession>B4DUT3</accession>
<accession>C9K0Y1</accession>
<accession>Q6PIL4</accession>
<accession>Q86YT0</accession>
<accession>Q8IXN5</accession>
<accession>Q96C70</accession>
<accession>Q9H9A2</accession>
<accession>Q9NPV2</accession>
<comment type="function">
    <text evidence="3 4 6">Plays a role in transcriptional regulation as a repressor that inhibits monoamine oxidase A (MAOA) activity and gene expression by binding to the promoter. Plays an important oncogenic role in mediating the full transforming effect of MYC in medulloblastoma cells. Involved in apoptotic signaling pathways; May act downstream of P38-kinase and BCL-2, but upstream of CASP3/caspase-3 as well as CCND1/cyclin D1 and E2F1.</text>
</comment>
<comment type="subunit">
    <text evidence="4 5 6 7 9">Interacts with MYC (PubMed:15994933, PubMed:16829576). Interacts (via IBM motifs) with PSIP1 (via IBD domain); phosphorylation increases its affinity for PSIP1 (PubMed:16735438, PubMed:25082813, PubMed:29997176).</text>
</comment>
<comment type="interaction">
    <interactant intactId="EBI-5278764">
        <id>Q96GN5</id>
    </interactant>
    <interactant intactId="EBI-2602396">
        <id>Q9ULW3</id>
        <label>ABT1</label>
    </interactant>
    <organismsDiffer>false</organismsDiffer>
    <experiments>3</experiments>
</comment>
<comment type="interaction">
    <interactant intactId="EBI-5278764">
        <id>Q96GN5</id>
    </interactant>
    <interactant intactId="EBI-5653378">
        <id>Q15327</id>
        <label>ANKRD1</label>
    </interactant>
    <organismsDiffer>false</organismsDiffer>
    <experiments>3</experiments>
</comment>
<comment type="interaction">
    <interactant intactId="EBI-5278764">
        <id>Q96GN5</id>
    </interactant>
    <interactant intactId="EBI-17183751">
        <id>X5D778</id>
        <label>ANKRD11</label>
    </interactant>
    <organismsDiffer>false</organismsDiffer>
    <experiments>3</experiments>
</comment>
<comment type="interaction">
    <interactant intactId="EBI-5278764">
        <id>Q96GN5</id>
    </interactant>
    <interactant intactId="EBI-5661893">
        <id>Q86SG2</id>
        <label>ANKRD23</label>
    </interactant>
    <organismsDiffer>false</organismsDiffer>
    <experiments>3</experiments>
</comment>
<comment type="interaction">
    <interactant intactId="EBI-5278764">
        <id>Q96GN5</id>
    </interactant>
    <interactant intactId="EBI-8640233">
        <id>Q5T686</id>
        <label>AVPI1</label>
    </interactant>
    <organismsDiffer>false</organismsDiffer>
    <experiments>3</experiments>
</comment>
<comment type="interaction">
    <interactant intactId="EBI-5278764">
        <id>Q96GN5</id>
    </interactant>
    <interactant intactId="EBI-356517">
        <id>Q9UL15</id>
        <label>BAG5</label>
    </interactant>
    <organismsDiffer>false</organismsDiffer>
    <experiments>3</experiments>
</comment>
<comment type="interaction">
    <interactant intactId="EBI-5278764">
        <id>Q96GN5</id>
    </interactant>
    <interactant intactId="EBI-10181188">
        <id>Q8N7W2-2</id>
        <label>BEND7</label>
    </interactant>
    <organismsDiffer>false</organismsDiffer>
    <experiments>3</experiments>
</comment>
<comment type="interaction">
    <interactant intactId="EBI-5278764">
        <id>Q96GN5</id>
    </interactant>
    <interactant intactId="EBI-12065306">
        <id>P55201-2</id>
        <label>BRPF1</label>
    </interactant>
    <organismsDiffer>false</organismsDiffer>
    <experiments>3</experiments>
</comment>
<comment type="interaction">
    <interactant intactId="EBI-5278764">
        <id>Q96GN5</id>
    </interactant>
    <interactant intactId="EBI-358049">
        <id>Q13895</id>
        <label>BYSL</label>
    </interactant>
    <organismsDiffer>false</organismsDiffer>
    <experiments>5</experiments>
</comment>
<comment type="interaction">
    <interactant intactId="EBI-5278764">
        <id>Q96GN5</id>
    </interactant>
    <interactant intactId="EBI-751319">
        <id>Q9H257</id>
        <label>CARD9</label>
    </interactant>
    <organismsDiffer>false</organismsDiffer>
    <experiments>4</experiments>
</comment>
<comment type="interaction">
    <interactant intactId="EBI-5278764">
        <id>Q96GN5</id>
    </interactant>
    <interactant intactId="EBI-2559016">
        <id>Q6NZI2</id>
        <label>CAVIN1</label>
    </interactant>
    <organismsDiffer>false</organismsDiffer>
    <experiments>3</experiments>
</comment>
<comment type="interaction">
    <interactant intactId="EBI-5278764">
        <id>Q96GN5</id>
    </interactant>
    <interactant intactId="EBI-744311">
        <id>Q8IYX3</id>
        <label>CCDC116</label>
    </interactant>
    <organismsDiffer>false</organismsDiffer>
    <experiments>3</experiments>
</comment>
<comment type="interaction">
    <interactant intactId="EBI-5278764">
        <id>Q96GN5</id>
    </interactant>
    <interactant intactId="EBI-739624">
        <id>Q8NHQ1</id>
        <label>CEP70</label>
    </interactant>
    <organismsDiffer>false</organismsDiffer>
    <experiments>7</experiments>
</comment>
<comment type="interaction">
    <interactant intactId="EBI-5278764">
        <id>Q96GN5</id>
    </interactant>
    <interactant intactId="EBI-748128">
        <id>Q8WYA6</id>
        <label>CTNNBL1</label>
    </interactant>
    <organismsDiffer>false</organismsDiffer>
    <experiments>4</experiments>
</comment>
<comment type="interaction">
    <interactant intactId="EBI-5278764">
        <id>Q96GN5</id>
    </interactant>
    <interactant intactId="EBI-77321">
        <id>Q9UER7</id>
        <label>DAXX</label>
    </interactant>
    <organismsDiffer>false</organismsDiffer>
    <experiments>3</experiments>
</comment>
<comment type="interaction">
    <interactant intactId="EBI-5278764">
        <id>Q96GN5</id>
    </interactant>
    <interactant intactId="EBI-399105">
        <id>Q9NPF5</id>
        <label>DMAP1</label>
    </interactant>
    <organismsDiffer>false</organismsDiffer>
    <experiments>3</experiments>
</comment>
<comment type="interaction">
    <interactant intactId="EBI-5278764">
        <id>Q96GN5</id>
    </interactant>
    <interactant intactId="EBI-299104">
        <id>P38919</id>
        <label>EIF4A3</label>
    </interactant>
    <organismsDiffer>false</organismsDiffer>
    <experiments>3</experiments>
</comment>
<comment type="interaction">
    <interactant intactId="EBI-5278764">
        <id>Q96GN5</id>
    </interactant>
    <interactant intactId="EBI-19153639">
        <id>Q9NTX9</id>
        <label>FAM217B</label>
    </interactant>
    <organismsDiffer>false</organismsDiffer>
    <experiments>3</experiments>
</comment>
<comment type="interaction">
    <interactant intactId="EBI-5278764">
        <id>Q96GN5</id>
    </interactant>
    <interactant intactId="EBI-10175124">
        <id>Q8IZU0</id>
        <label>FAM9B</label>
    </interactant>
    <organismsDiffer>false</organismsDiffer>
    <experiments>3</experiments>
</comment>
<comment type="interaction">
    <interactant intactId="EBI-5278764">
        <id>Q96GN5</id>
    </interactant>
    <interactant intactId="EBI-618309">
        <id>Q08379</id>
        <label>GOLGA2</label>
    </interactant>
    <organismsDiffer>false</organismsDiffer>
    <experiments>3</experiments>
</comment>
<comment type="interaction">
    <interactant intactId="EBI-5278764">
        <id>Q96GN5</id>
    </interactant>
    <interactant intactId="EBI-11519926">
        <id>Q6PI77</id>
        <label>GPRASP3</label>
    </interactant>
    <organismsDiffer>false</organismsDiffer>
    <experiments>3</experiments>
</comment>
<comment type="interaction">
    <interactant intactId="EBI-5278764">
        <id>Q96GN5</id>
    </interactant>
    <interactant intactId="EBI-7116203">
        <id>O75031</id>
        <label>HSF2BP</label>
    </interactant>
    <organismsDiffer>false</organismsDiffer>
    <experiments>3</experiments>
</comment>
<comment type="interaction">
    <interactant intactId="EBI-5278764">
        <id>Q96GN5</id>
    </interactant>
    <interactant intactId="EBI-488533">
        <id>Q8WYH8</id>
        <label>ING5</label>
    </interactant>
    <organismsDiffer>false</organismsDiffer>
    <experiments>3</experiments>
</comment>
<comment type="interaction">
    <interactant intactId="EBI-5278764">
        <id>Q96GN5</id>
    </interactant>
    <interactant intactId="EBI-12094820">
        <id>A0A0C4DFT8</id>
        <label>JADE2</label>
    </interactant>
    <organismsDiffer>false</organismsDiffer>
    <experiments>3</experiments>
</comment>
<comment type="interaction">
    <interactant intactId="EBI-5278764">
        <id>Q96GN5</id>
    </interactant>
    <interactant intactId="EBI-10172290">
        <id>P60409</id>
        <label>KRTAP10-7</label>
    </interactant>
    <organismsDiffer>false</organismsDiffer>
    <experiments>3</experiments>
</comment>
<comment type="interaction">
    <interactant intactId="EBI-5278764">
        <id>Q96GN5</id>
    </interactant>
    <interactant intactId="EBI-8639312">
        <id>P25800</id>
        <label>LMO1</label>
    </interactant>
    <organismsDiffer>false</organismsDiffer>
    <experiments>3</experiments>
</comment>
<comment type="interaction">
    <interactant intactId="EBI-5278764">
        <id>Q96GN5</id>
    </interactant>
    <interactant intactId="EBI-348259">
        <id>Q96EZ8</id>
        <label>MCRS1</label>
    </interactant>
    <organismsDiffer>false</organismsDiffer>
    <experiments>6</experiments>
</comment>
<comment type="interaction">
    <interactant intactId="EBI-5278764">
        <id>Q96GN5</id>
    </interactant>
    <interactant intactId="EBI-724076">
        <id>Q99750</id>
        <label>MDFI</label>
    </interactant>
    <organismsDiffer>false</organismsDiffer>
    <experiments>6</experiments>
</comment>
<comment type="interaction">
    <interactant intactId="EBI-5278764">
        <id>Q96GN5</id>
    </interactant>
    <interactant intactId="EBI-16439278">
        <id>Q6FHY5</id>
        <label>MEOX2</label>
    </interactant>
    <organismsDiffer>false</organismsDiffer>
    <experiments>3</experiments>
</comment>
<comment type="interaction">
    <interactant intactId="EBI-5278764">
        <id>Q96GN5</id>
    </interactant>
    <interactant intactId="EBI-1048159">
        <id>P55081</id>
        <label>MFAP1</label>
    </interactant>
    <organismsDiffer>false</organismsDiffer>
    <experiments>3</experiments>
</comment>
<comment type="interaction">
    <interactant intactId="EBI-5278764">
        <id>Q96GN5</id>
    </interactant>
    <interactant intactId="EBI-744248">
        <id>P40692</id>
        <label>MLH1</label>
    </interactant>
    <organismsDiffer>false</organismsDiffer>
    <experiments>4</experiments>
</comment>
<comment type="interaction">
    <interactant intactId="EBI-5278764">
        <id>Q96GN5</id>
    </interactant>
    <interactant intactId="EBI-9675802">
        <id>Q6PF18</id>
        <label>MORN3</label>
    </interactant>
    <organismsDiffer>false</organismsDiffer>
    <experiments>3</experiments>
</comment>
<comment type="interaction">
    <interactant intactId="EBI-5278764">
        <id>Q96GN5</id>
    </interactant>
    <interactant intactId="EBI-723426">
        <id>Q13084</id>
        <label>MRPL28</label>
    </interactant>
    <organismsDiffer>false</organismsDiffer>
    <experiments>3</experiments>
</comment>
<comment type="interaction">
    <interactant intactId="EBI-5278764">
        <id>Q96GN5</id>
    </interactant>
    <interactant intactId="EBI-1246238">
        <id>P17568</id>
        <label>NDUFB7</label>
    </interactant>
    <organismsDiffer>false</organismsDiffer>
    <experiments>3</experiments>
</comment>
<comment type="interaction">
    <interactant intactId="EBI-5278764">
        <id>Q96GN5</id>
    </interactant>
    <interactant intactId="EBI-716098">
        <id>Q9UGY1</id>
        <label>NOL12</label>
    </interactant>
    <organismsDiffer>false</organismsDiffer>
    <experiments>3</experiments>
</comment>
<comment type="interaction">
    <interactant intactId="EBI-5278764">
        <id>Q96GN5</id>
    </interactant>
    <interactant intactId="EBI-356811">
        <id>P46087</id>
        <label>NOP2</label>
    </interactant>
    <organismsDiffer>false</organismsDiffer>
    <experiments>3</experiments>
</comment>
<comment type="interaction">
    <interactant intactId="EBI-5278764">
        <id>Q96GN5</id>
    </interactant>
    <interactant intactId="EBI-301611">
        <id>P40424</id>
        <label>PBX1</label>
    </interactant>
    <organismsDiffer>false</organismsDiffer>
    <experiments>3</experiments>
</comment>
<comment type="interaction">
    <interactant intactId="EBI-5278764">
        <id>Q96GN5</id>
    </interactant>
    <interactant intactId="EBI-348489">
        <id>P40425</id>
        <label>PBX2</label>
    </interactant>
    <organismsDiffer>false</organismsDiffer>
    <experiments>3</experiments>
</comment>
<comment type="interaction">
    <interactant intactId="EBI-5278764">
        <id>Q96GN5</id>
    </interactant>
    <interactant intactId="EBI-79165">
        <id>Q9NRD5</id>
        <label>PICK1</label>
    </interactant>
    <organismsDiffer>false</organismsDiffer>
    <experiments>3</experiments>
</comment>
<comment type="interaction">
    <interactant intactId="EBI-5278764">
        <id>Q96GN5</id>
    </interactant>
    <interactant intactId="EBI-357318">
        <id>Q9NWS0</id>
        <label>PIH1D1</label>
    </interactant>
    <organismsDiffer>false</organismsDiffer>
    <experiments>3</experiments>
</comment>
<comment type="interaction">
    <interactant intactId="EBI-5278764">
        <id>Q96GN5</id>
    </interactant>
    <interactant intactId="EBI-11532361">
        <id>P78356-2</id>
        <label>PIP4K2B</label>
    </interactant>
    <organismsDiffer>false</organismsDiffer>
    <experiments>3</experiments>
</comment>
<comment type="interaction">
    <interactant intactId="EBI-5278764">
        <id>Q96GN5</id>
    </interactant>
    <interactant intactId="EBI-710402">
        <id>Q96I34</id>
        <label>PPP1R16A</label>
    </interactant>
    <organismsDiffer>false</organismsDiffer>
    <experiments>3</experiments>
</comment>
<comment type="interaction">
    <interactant intactId="EBI-5278764">
        <id>Q96GN5</id>
    </interactant>
    <interactant intactId="EBI-10293968">
        <id>Q96T49</id>
        <label>PPP1R16B</label>
    </interactant>
    <organismsDiffer>false</organismsDiffer>
    <experiments>3</experiments>
</comment>
<comment type="interaction">
    <interactant intactId="EBI-5278764">
        <id>Q96GN5</id>
    </interactant>
    <interactant intactId="EBI-3957793">
        <id>Q9GZV8</id>
        <label>PRDM14</label>
    </interactant>
    <organismsDiffer>false</organismsDiffer>
    <experiments>6</experiments>
</comment>
<comment type="interaction">
    <interactant intactId="EBI-5278764">
        <id>Q96GN5</id>
    </interactant>
    <interactant intactId="EBI-1567797">
        <id>Q8WWY3</id>
        <label>PRPF31</label>
    </interactant>
    <organismsDiffer>false</organismsDiffer>
    <experiments>3</experiments>
</comment>
<comment type="interaction">
    <interactant intactId="EBI-5278764">
        <id>Q96GN5</id>
    </interactant>
    <interactant intactId="EBI-7223720">
        <id>Q9Y3A4</id>
        <label>RRP7A</label>
    </interactant>
    <organismsDiffer>false</organismsDiffer>
    <experiments>3</experiments>
</comment>
<comment type="interaction">
    <interactant intactId="EBI-5278764">
        <id>Q96GN5</id>
    </interactant>
    <interactant intactId="EBI-2876632">
        <id>Q6IEG0</id>
        <label>SNRNP48</label>
    </interactant>
    <organismsDiffer>false</organismsDiffer>
    <experiments>3</experiments>
</comment>
<comment type="interaction">
    <interactant intactId="EBI-5278764">
        <id>Q96GN5</id>
    </interactant>
    <interactant intactId="EBI-10237585">
        <id>Q16384</id>
        <label>SSX1</label>
    </interactant>
    <organismsDiffer>false</organismsDiffer>
    <experiments>3</experiments>
</comment>
<comment type="interaction">
    <interactant intactId="EBI-5278764">
        <id>Q96GN5</id>
    </interactant>
    <interactant intactId="EBI-2212028">
        <id>Q9Y2D8</id>
        <label>SSX2IP</label>
    </interactant>
    <organismsDiffer>false</organismsDiffer>
    <experiments>3</experiments>
</comment>
<comment type="interaction">
    <interactant intactId="EBI-5278764">
        <id>Q96GN5</id>
    </interactant>
    <interactant intactId="EBI-714135">
        <id>O75558</id>
        <label>STX11</label>
    </interactant>
    <organismsDiffer>false</organismsDiffer>
    <experiments>3</experiments>
</comment>
<comment type="interaction">
    <interactant intactId="EBI-5278764">
        <id>Q96GN5</id>
    </interactant>
    <interactant intactId="EBI-742268">
        <id>O75478</id>
        <label>TADA2A</label>
    </interactant>
    <organismsDiffer>false</organismsDiffer>
    <experiments>3</experiments>
</comment>
<comment type="interaction">
    <interactant intactId="EBI-5278764">
        <id>Q96GN5</id>
    </interactant>
    <interactant intactId="EBI-10178002">
        <id>P0C1Z6-2</id>
        <label>TFPT</label>
    </interactant>
    <organismsDiffer>false</organismsDiffer>
    <experiments>3</experiments>
</comment>
<comment type="interaction">
    <interactant intactId="EBI-5278764">
        <id>Q96GN5</id>
    </interactant>
    <interactant intactId="EBI-746692">
        <id>P19237</id>
        <label>TNNI1</label>
    </interactant>
    <organismsDiffer>false</organismsDiffer>
    <experiments>3</experiments>
</comment>
<comment type="interaction">
    <interactant intactId="EBI-5278764">
        <id>Q96GN5</id>
    </interactant>
    <interactant intactId="EBI-765817">
        <id>Q9Y228</id>
        <label>TRAF3IP3</label>
    </interactant>
    <organismsDiffer>false</organismsDiffer>
    <experiments>3</experiments>
</comment>
<comment type="interaction">
    <interactant intactId="EBI-5278764">
        <id>Q96GN5</id>
    </interactant>
    <interactant intactId="EBI-5235829">
        <id>Q8IWZ5</id>
        <label>TRIM42</label>
    </interactant>
    <organismsDiffer>false</organismsDiffer>
    <experiments>3</experiments>
</comment>
<comment type="interaction">
    <interactant intactId="EBI-5278764">
        <id>Q96GN5</id>
    </interactant>
    <interactant intactId="EBI-356983">
        <id>P11441</id>
        <label>UBL4A</label>
    </interactant>
    <organismsDiffer>false</organismsDiffer>
    <experiments>3</experiments>
</comment>
<comment type="interaction">
    <interactant intactId="EBI-5278764">
        <id>Q96GN5</id>
    </interactant>
    <interactant intactId="EBI-714067">
        <id>Q9NQZ2</id>
        <label>UTP3</label>
    </interactant>
    <organismsDiffer>false</organismsDiffer>
    <experiments>3</experiments>
</comment>
<comment type="interaction">
    <interactant intactId="EBI-5278764">
        <id>Q96GN5</id>
    </interactant>
    <interactant intactId="EBI-10183064">
        <id>Q8N5A5-2</id>
        <label>ZGPAT</label>
    </interactant>
    <organismsDiffer>false</organismsDiffer>
    <experiments>9</experiments>
</comment>
<comment type="interaction">
    <interactant intactId="EBI-5278764">
        <id>Q96GN5</id>
    </interactant>
    <interactant intactId="EBI-10177272">
        <id>P15622-3</id>
        <label>ZNF250</label>
    </interactant>
    <organismsDiffer>false</organismsDiffer>
    <experiments>3</experiments>
</comment>
<comment type="interaction">
    <interactant intactId="EBI-5278764">
        <id>Q96GN5</id>
    </interactant>
    <interactant intactId="EBI-11962468">
        <id>Q7Z4V0</id>
        <label>ZNF438</label>
    </interactant>
    <organismsDiffer>false</organismsDiffer>
    <experiments>3</experiments>
</comment>
<comment type="interaction">
    <interactant intactId="EBI-5278764">
        <id>Q96GN5</id>
    </interactant>
    <interactant intactId="EBI-4395669">
        <id>Q6ZNG0</id>
        <label>ZNF620</label>
    </interactant>
    <organismsDiffer>false</organismsDiffer>
    <experiments>3</experiments>
</comment>
<comment type="interaction">
    <interactant intactId="EBI-5278764">
        <id>Q96GN5</id>
    </interactant>
    <interactant intactId="EBI-740865">
        <id>O75541</id>
        <label>ZNF821</label>
    </interactant>
    <organismsDiffer>false</organismsDiffer>
    <experiments>3</experiments>
</comment>
<comment type="interaction">
    <interactant intactId="EBI-9091443">
        <id>Q96GN5-2</id>
    </interactant>
    <interactant intactId="EBI-16429430">
        <id>A0A0S2Z4M1</id>
        <label>AXIN1</label>
    </interactant>
    <organismsDiffer>false</organismsDiffer>
    <experiments>3</experiments>
</comment>
<comment type="interaction">
    <interactant intactId="EBI-9091443">
        <id>Q96GN5-2</id>
    </interactant>
    <interactant intactId="EBI-348399">
        <id>P22607</id>
        <label>FGFR3</label>
    </interactant>
    <organismsDiffer>false</organismsDiffer>
    <experiments>3</experiments>
</comment>
<comment type="interaction">
    <interactant intactId="EBI-9091443">
        <id>Q96GN5-2</id>
    </interactant>
    <interactant intactId="EBI-350145">
        <id>P01112</id>
        <label>HRAS</label>
    </interactant>
    <organismsDiffer>false</organismsDiffer>
    <experiments>3</experiments>
</comment>
<comment type="interaction">
    <interactant intactId="EBI-9091443">
        <id>Q96GN5-2</id>
    </interactant>
    <interactant intactId="EBI-351935">
        <id>P02545</id>
        <label>LMNA</label>
    </interactant>
    <organismsDiffer>false</organismsDiffer>
    <experiments>3</experiments>
</comment>
<comment type="interaction">
    <interactant intactId="EBI-9091443">
        <id>Q96GN5-2</id>
    </interactant>
    <interactant intactId="EBI-1567797">
        <id>Q8WWY3</id>
        <label>PRPF31</label>
    </interactant>
    <organismsDiffer>false</organismsDiffer>
    <experiments>3</experiments>
</comment>
<comment type="interaction">
    <interactant intactId="EBI-9091443">
        <id>Q96GN5-2</id>
    </interactant>
    <interactant intactId="EBI-5235340">
        <id>Q7Z699</id>
        <label>SPRED1</label>
    </interactant>
    <organismsDiffer>false</organismsDiffer>
    <experiments>3</experiments>
</comment>
<comment type="interaction">
    <interactant intactId="EBI-9091443">
        <id>Q96GN5-2</id>
    </interactant>
    <interactant intactId="EBI-524753">
        <id>Q8IUH5</id>
        <label>ZDHHC17</label>
    </interactant>
    <organismsDiffer>false</organismsDiffer>
    <experiments>2</experiments>
</comment>
<comment type="subcellular location">
    <subcellularLocation>
        <location>Cytoplasm</location>
    </subcellularLocation>
    <subcellularLocation>
        <location>Nucleus</location>
    </subcellularLocation>
    <text>Associates with chromatin. Translocates from cytoplasm to nucleus under dexamethasone induction.</text>
</comment>
<comment type="alternative products">
    <event type="alternative splicing"/>
    <isoform>
        <id>Q96GN5-1</id>
        <name>1</name>
        <name>Variant C</name>
        <sequence type="displayed"/>
    </isoform>
    <isoform>
        <id>Q96GN5-2</id>
        <name>2</name>
        <name>Variant B</name>
        <sequence type="described" ref="VSP_020398"/>
    </isoform>
    <isoform>
        <id>Q96GN5-4</id>
        <name>3</name>
        <sequence type="described" ref="VSP_043806"/>
    </isoform>
    <isoform>
        <id>Q96GN5-5</id>
        <name>4</name>
        <sequence type="described" ref="VSP_046270"/>
    </isoform>
</comment>
<comment type="tissue specificity">
    <text evidence="3 4">Ubiquitous. Overexpressed in medulloblastoma.</text>
</comment>
<comment type="induction">
    <text>By MYC overexpression in a concentration dependent manner in neuroblastoma cell line.</text>
</comment>
<comment type="PTM">
    <text evidence="9">Phosphorylation increases its interaction with PSIP1.</text>
</comment>
<comment type="miscellaneous">
    <text>Cells lacking CDCA7L display a reduction of 25-30% of colony formation in medulloblastoma cell lines. CDCA7L overexpression induces colony formation.</text>
</comment>
<comment type="sequence caution" evidence="13">
    <conflict type="frameshift">
        <sequence resource="EMBL-CDS" id="BAB14330"/>
    </conflict>
</comment>
<gene>
    <name type="primary">CDCA7L</name>
    <name type="synonym">HR1</name>
    <name type="synonym">JPO2</name>
    <name type="synonym">R1</name>
</gene>
<feature type="chain" id="PRO_0000249313" description="Cell division cycle-associated 7-like protein">
    <location>
        <begin position="1"/>
        <end position="454"/>
    </location>
</feature>
<feature type="region of interest" description="Disordered" evidence="2">
    <location>
        <begin position="103"/>
        <end position="169"/>
    </location>
</feature>
<feature type="region of interest" description="Disordered" evidence="2">
    <location>
        <begin position="188"/>
        <end position="213"/>
    </location>
</feature>
<feature type="region of interest" description="MYC-binding">
    <location>
        <begin position="213"/>
        <end position="235"/>
    </location>
</feature>
<feature type="short sequence motif" description="Integrase domain-binding motif 1 (IBM1)" evidence="9">
    <location>
        <begin position="9"/>
        <end position="33"/>
    </location>
</feature>
<feature type="short sequence motif" description="Integrase domain-binding motif 2 (IBM2)" evidence="9">
    <location>
        <begin position="65"/>
        <end position="91"/>
    </location>
</feature>
<feature type="compositionally biased region" description="Acidic residues" evidence="2">
    <location>
        <begin position="117"/>
        <end position="126"/>
    </location>
</feature>
<feature type="modified residue" description="Phosphoserine" evidence="9 16 19 20">
    <location>
        <position position="21"/>
    </location>
</feature>
<feature type="modified residue" description="Phosphothreonine" evidence="9 19 20">
    <location>
        <position position="77"/>
    </location>
</feature>
<feature type="modified residue" description="Phosphoserine" evidence="9 19 20">
    <location>
        <position position="79"/>
    </location>
</feature>
<feature type="modified residue" description="Phosphothreonine" evidence="9">
    <location>
        <position position="81"/>
    </location>
</feature>
<feature type="modified residue" description="Phosphothreonine" evidence="9">
    <location>
        <position position="88"/>
    </location>
</feature>
<feature type="modified residue" description="Phosphoserine" evidence="18 20">
    <location>
        <position position="105"/>
    </location>
</feature>
<feature type="modified residue" description="Phosphoserine" evidence="18 20">
    <location>
        <position position="108"/>
    </location>
</feature>
<feature type="modified residue" description="Phosphoserine" evidence="17 18 19 20 21">
    <location>
        <position position="117"/>
    </location>
</feature>
<feature type="modified residue" description="Phosphoserine" evidence="20">
    <location>
        <position position="138"/>
    </location>
</feature>
<feature type="modified residue" description="Phosphoserine" evidence="19 20">
    <location>
        <position position="139"/>
    </location>
</feature>
<feature type="modified residue" description="Phosphoserine" evidence="18 19 20">
    <location>
        <position position="162"/>
    </location>
</feature>
<feature type="modified residue" description="Phosphoserine" evidence="1">
    <location>
        <position position="195"/>
    </location>
</feature>
<feature type="modified residue" description="Phosphoserine" evidence="1">
    <location>
        <position position="197"/>
    </location>
</feature>
<feature type="modified residue" description="Phosphoserine" evidence="17 20 21">
    <location>
        <position position="261"/>
    </location>
</feature>
<feature type="cross-link" description="Glycyl lysine isopeptide (Lys-Gly) (interchain with G-Cter in SUMO2)" evidence="22">
    <location>
        <position position="222"/>
    </location>
</feature>
<feature type="cross-link" description="Glycyl lysine isopeptide (Lys-Gly) (interchain with G-Cter in SUMO2)" evidence="22">
    <location>
        <position position="225"/>
    </location>
</feature>
<feature type="splice variant" id="VSP_043806" description="In isoform 3." evidence="10">
    <location>
        <begin position="1"/>
        <end position="34"/>
    </location>
</feature>
<feature type="splice variant" id="VSP_020398" description="In isoform 2." evidence="11 12">
    <location>
        <position position="55"/>
    </location>
</feature>
<feature type="splice variant" id="VSP_046270" description="In isoform 4." evidence="10">
    <location>
        <begin position="56"/>
        <end position="101"/>
    </location>
</feature>
<feature type="sequence variant" id="VAR_083475" description="In dbSNP:rs937337760." evidence="8">
    <original>D</original>
    <variation>N</variation>
    <location>
        <position position="45"/>
    </location>
</feature>
<feature type="sequence variant" id="VAR_050776" description="In dbSNP:rs35281045.">
    <original>R</original>
    <variation>S</variation>
    <location>
        <position position="187"/>
    </location>
</feature>
<feature type="mutagenesis site" description="Significant loss of interaction with PSIP1; when associated with A-17. Complete loss of interaction with PSIP1; when associated with A-17, A-72 and A-73." evidence="9">
    <original>I</original>
    <variation>A</variation>
    <location>
        <position position="16"/>
    </location>
</feature>
<feature type="mutagenesis site" description="Significant loss of interaction with PSIP1; when associated with A-16. Complete loss of interaction with PSIP1; when associated with A-16, A-72 and A-73." evidence="9">
    <original>F</original>
    <variation>A</variation>
    <location>
        <position position="17"/>
    </location>
</feature>
<feature type="mutagenesis site" description="Phosphomimetic mutant. Increased interaction with PSIP1; when associated with D-77, D-79 and D-81." evidence="9">
    <original>S</original>
    <variation>D</variation>
    <location>
        <position position="21"/>
    </location>
</feature>
<feature type="mutagenesis site" description="Significant loss of interaction with PSIP1; when associated with A-73. Complete loss of interaction with PSIP1; when associated with A-16, A-17 and A-73." evidence="9">
    <original>I</original>
    <variation>A</variation>
    <location>
        <position position="72"/>
    </location>
</feature>
<feature type="mutagenesis site" description="Significant loss of interaction with PSIP1; when associated with A-72. Complete loss of interaction with PSIP1; when associated with A-16, A-17 and A-72." evidence="9">
    <original>F</original>
    <variation>A</variation>
    <location>
        <position position="73"/>
    </location>
</feature>
<feature type="mutagenesis site" description="Phosphomimetic mutant. Increased interaction with PSIP1; when associated with D-21, D-79 and D-81." evidence="9">
    <original>T</original>
    <variation>D</variation>
    <location>
        <position position="77"/>
    </location>
</feature>
<feature type="mutagenesis site" description="Phosphomimetic mutant. Increased interaction with PSIP1; when associated with D-21, D-77 and D-81." evidence="9">
    <original>S</original>
    <variation>D</variation>
    <location>
        <position position="79"/>
    </location>
</feature>
<feature type="mutagenesis site" description="Phosphomimetic mutant. Increased interaction with PSIP1; when associated with D-21, D-77 and D-79." evidence="9">
    <original>T</original>
    <variation>D</variation>
    <location>
        <position position="81"/>
    </location>
</feature>
<feature type="sequence conflict" description="In Ref. 4; BAG62445." evidence="13" ref="4">
    <original>S</original>
    <variation>G</variation>
    <location>
        <position position="46"/>
    </location>
</feature>
<feature type="sequence conflict" description="In Ref. 9; CAB94887." evidence="13" ref="9">
    <original>V</original>
    <variation>A</variation>
    <location>
        <position position="340"/>
    </location>
</feature>
<feature type="sequence conflict" description="In Ref. 8; AAH32576." evidence="13" ref="8">
    <original>Y</original>
    <variation>C</variation>
    <location>
        <position position="345"/>
    </location>
</feature>
<feature type="helix" evidence="24">
    <location>
        <begin position="11"/>
        <end position="18"/>
    </location>
</feature>
<feature type="helix" evidence="23">
    <location>
        <begin position="67"/>
        <end position="73"/>
    </location>
</feature>
<feature type="helix" evidence="23">
    <location>
        <begin position="78"/>
        <end position="81"/>
    </location>
</feature>
<sequence>MELATRYQIPKEVADIFNAPSDDEEFVGFRDDVPMETLSSEESCDSFDSLESGKQQDVRFHSKYFTEELRRIFIEDTDSETEDFAGFTQSDLNGKTNPEVMVVESDLSDDGKASLVSEEEEDEEEDKATPRRSRSRRSSIGLRVAFQFPTKKLANKPDKNSSSEQLFSSARLQNEKKTILERKKDCRQVIQREDSTSESEDDSRDESQESSDALLKRTMNIKENKAMLAQLLAELNSMPDFFPVRTPTSASRKKTVRRAFSEGQITRRMNPTRSARPPEKFALENFTVSAAKFAEEFYSFRRRKTIGGKCREYRRRHRISSFRPVEDITEEDLENVAITVRDKIYDKVLGNTCHQCRQKTIDTKTVCRNQGCCGVRGQFCGPCLRNRYGEDVRSALLDPDWVCPPCRGICNCSYCRKRDGRCATGILIHLAKFYGYDNVKEYLESLQKELVEDN</sequence>
<reference key="1">
    <citation type="journal article" date="2005" name="Cancer Res.">
        <title>Identification of a novel c-Myc protein interactor, JPO2, with transforming activity in medulloblastoma cells.</title>
        <authorList>
            <person name="Huang A."/>
            <person name="Ho C.S.W."/>
            <person name="Ponzielli R."/>
            <person name="Barsyte-Lovejoy D."/>
            <person name="Bouffet E."/>
            <person name="Picard D."/>
            <person name="Hawkins C.E."/>
            <person name="Penn L.Z."/>
        </authorList>
    </citation>
    <scope>NUCLEOTIDE SEQUENCE [MRNA] (ISOFORM 1)</scope>
    <scope>TISSUE SPECIFICITY</scope>
    <scope>SUBCELLULAR LOCATION</scope>
    <scope>REGION</scope>
    <scope>INTERACTION WITH MYC</scope>
    <scope>FUNCTION</scope>
</reference>
<reference key="2">
    <citation type="journal article" date="2005" name="J. Biol. Chem.">
        <title>R1, a novel repressor of the human monoamine oxidase A.</title>
        <authorList>
            <person name="Chen K."/>
            <person name="Ou X.-M."/>
            <person name="Chen G."/>
            <person name="Choi S.H."/>
            <person name="Shih J.C."/>
        </authorList>
    </citation>
    <scope>NUCLEOTIDE SEQUENCE [MRNA] (ISOFORM 1)</scope>
    <scope>TISSUE SPECIFICITY</scope>
    <scope>SUBCELLULAR LOCATION</scope>
    <scope>FUNCTION</scope>
</reference>
<reference key="3">
    <citation type="submission" date="2002-10" db="EMBL/GenBank/DDBJ databases">
        <title>RAM2 augments production of recombinant adeno-associated virus.</title>
        <authorList>
            <person name="Cathomen T."/>
            <person name="Wang K.H."/>
            <person name="Oswald W.B."/>
            <person name="Weitzman M.D."/>
        </authorList>
    </citation>
    <scope>NUCLEOTIDE SEQUENCE [MRNA] (ISOFORMS 1 AND 2)</scope>
</reference>
<reference key="4">
    <citation type="journal article" date="2004" name="Nat. Genet.">
        <title>Complete sequencing and characterization of 21,243 full-length human cDNAs.</title>
        <authorList>
            <person name="Ota T."/>
            <person name="Suzuki Y."/>
            <person name="Nishikawa T."/>
            <person name="Otsuki T."/>
            <person name="Sugiyama T."/>
            <person name="Irie R."/>
            <person name="Wakamatsu A."/>
            <person name="Hayashi K."/>
            <person name="Sato H."/>
            <person name="Nagai K."/>
            <person name="Kimura K."/>
            <person name="Makita H."/>
            <person name="Sekine M."/>
            <person name="Obayashi M."/>
            <person name="Nishi T."/>
            <person name="Shibahara T."/>
            <person name="Tanaka T."/>
            <person name="Ishii S."/>
            <person name="Yamamoto J."/>
            <person name="Saito K."/>
            <person name="Kawai Y."/>
            <person name="Isono Y."/>
            <person name="Nakamura Y."/>
            <person name="Nagahari K."/>
            <person name="Murakami K."/>
            <person name="Yasuda T."/>
            <person name="Iwayanagi T."/>
            <person name="Wagatsuma M."/>
            <person name="Shiratori A."/>
            <person name="Sudo H."/>
            <person name="Hosoiri T."/>
            <person name="Kaku Y."/>
            <person name="Kodaira H."/>
            <person name="Kondo H."/>
            <person name="Sugawara M."/>
            <person name="Takahashi M."/>
            <person name="Kanda K."/>
            <person name="Yokoi T."/>
            <person name="Furuya T."/>
            <person name="Kikkawa E."/>
            <person name="Omura Y."/>
            <person name="Abe K."/>
            <person name="Kamihara K."/>
            <person name="Katsuta N."/>
            <person name="Sato K."/>
            <person name="Tanikawa M."/>
            <person name="Yamazaki M."/>
            <person name="Ninomiya K."/>
            <person name="Ishibashi T."/>
            <person name="Yamashita H."/>
            <person name="Murakawa K."/>
            <person name="Fujimori K."/>
            <person name="Tanai H."/>
            <person name="Kimata M."/>
            <person name="Watanabe M."/>
            <person name="Hiraoka S."/>
            <person name="Chiba Y."/>
            <person name="Ishida S."/>
            <person name="Ono Y."/>
            <person name="Takiguchi S."/>
            <person name="Watanabe S."/>
            <person name="Yosida M."/>
            <person name="Hotuta T."/>
            <person name="Kusano J."/>
            <person name="Kanehori K."/>
            <person name="Takahashi-Fujii A."/>
            <person name="Hara H."/>
            <person name="Tanase T.-O."/>
            <person name="Nomura Y."/>
            <person name="Togiya S."/>
            <person name="Komai F."/>
            <person name="Hara R."/>
            <person name="Takeuchi K."/>
            <person name="Arita M."/>
            <person name="Imose N."/>
            <person name="Musashino K."/>
            <person name="Yuuki H."/>
            <person name="Oshima A."/>
            <person name="Sasaki N."/>
            <person name="Aotsuka S."/>
            <person name="Yoshikawa Y."/>
            <person name="Matsunawa H."/>
            <person name="Ichihara T."/>
            <person name="Shiohata N."/>
            <person name="Sano S."/>
            <person name="Moriya S."/>
            <person name="Momiyama H."/>
            <person name="Satoh N."/>
            <person name="Takami S."/>
            <person name="Terashima Y."/>
            <person name="Suzuki O."/>
            <person name="Nakagawa S."/>
            <person name="Senoh A."/>
            <person name="Mizoguchi H."/>
            <person name="Goto Y."/>
            <person name="Shimizu F."/>
            <person name="Wakebe H."/>
            <person name="Hishigaki H."/>
            <person name="Watanabe T."/>
            <person name="Sugiyama A."/>
            <person name="Takemoto M."/>
            <person name="Kawakami B."/>
            <person name="Yamazaki M."/>
            <person name="Watanabe K."/>
            <person name="Kumagai A."/>
            <person name="Itakura S."/>
            <person name="Fukuzumi Y."/>
            <person name="Fujimori Y."/>
            <person name="Komiyama M."/>
            <person name="Tashiro H."/>
            <person name="Tanigami A."/>
            <person name="Fujiwara T."/>
            <person name="Ono T."/>
            <person name="Yamada K."/>
            <person name="Fujii Y."/>
            <person name="Ozaki K."/>
            <person name="Hirao M."/>
            <person name="Ohmori Y."/>
            <person name="Kawabata A."/>
            <person name="Hikiji T."/>
            <person name="Kobatake N."/>
            <person name="Inagaki H."/>
            <person name="Ikema Y."/>
            <person name="Okamoto S."/>
            <person name="Okitani R."/>
            <person name="Kawakami T."/>
            <person name="Noguchi S."/>
            <person name="Itoh T."/>
            <person name="Shigeta K."/>
            <person name="Senba T."/>
            <person name="Matsumura K."/>
            <person name="Nakajima Y."/>
            <person name="Mizuno T."/>
            <person name="Morinaga M."/>
            <person name="Sasaki M."/>
            <person name="Togashi T."/>
            <person name="Oyama M."/>
            <person name="Hata H."/>
            <person name="Watanabe M."/>
            <person name="Komatsu T."/>
            <person name="Mizushima-Sugano J."/>
            <person name="Satoh T."/>
            <person name="Shirai Y."/>
            <person name="Takahashi Y."/>
            <person name="Nakagawa K."/>
            <person name="Okumura K."/>
            <person name="Nagase T."/>
            <person name="Nomura N."/>
            <person name="Kikuchi H."/>
            <person name="Masuho Y."/>
            <person name="Yamashita R."/>
            <person name="Nakai K."/>
            <person name="Yada T."/>
            <person name="Nakamura Y."/>
            <person name="Ohara O."/>
            <person name="Isogai T."/>
            <person name="Sugano S."/>
        </authorList>
    </citation>
    <scope>NUCLEOTIDE SEQUENCE [LARGE SCALE MRNA] (ISOFORMS 1; 3 AND 4)</scope>
</reference>
<reference key="5">
    <citation type="journal article" date="2003" name="Nature">
        <title>The DNA sequence of human chromosome 7.</title>
        <authorList>
            <person name="Hillier L.W."/>
            <person name="Fulton R.S."/>
            <person name="Fulton L.A."/>
            <person name="Graves T.A."/>
            <person name="Pepin K.H."/>
            <person name="Wagner-McPherson C."/>
            <person name="Layman D."/>
            <person name="Maas J."/>
            <person name="Jaeger S."/>
            <person name="Walker R."/>
            <person name="Wylie K."/>
            <person name="Sekhon M."/>
            <person name="Becker M.C."/>
            <person name="O'Laughlin M.D."/>
            <person name="Schaller M.E."/>
            <person name="Fewell G.A."/>
            <person name="Delehaunty K.D."/>
            <person name="Miner T.L."/>
            <person name="Nash W.E."/>
            <person name="Cordes M."/>
            <person name="Du H."/>
            <person name="Sun H."/>
            <person name="Edwards J."/>
            <person name="Bradshaw-Cordum H."/>
            <person name="Ali J."/>
            <person name="Andrews S."/>
            <person name="Isak A."/>
            <person name="Vanbrunt A."/>
            <person name="Nguyen C."/>
            <person name="Du F."/>
            <person name="Lamar B."/>
            <person name="Courtney L."/>
            <person name="Kalicki J."/>
            <person name="Ozersky P."/>
            <person name="Bielicki L."/>
            <person name="Scott K."/>
            <person name="Holmes A."/>
            <person name="Harkins R."/>
            <person name="Harris A."/>
            <person name="Strong C.M."/>
            <person name="Hou S."/>
            <person name="Tomlinson C."/>
            <person name="Dauphin-Kohlberg S."/>
            <person name="Kozlowicz-Reilly A."/>
            <person name="Leonard S."/>
            <person name="Rohlfing T."/>
            <person name="Rock S.M."/>
            <person name="Tin-Wollam A.-M."/>
            <person name="Abbott A."/>
            <person name="Minx P."/>
            <person name="Maupin R."/>
            <person name="Strowmatt C."/>
            <person name="Latreille P."/>
            <person name="Miller N."/>
            <person name="Johnson D."/>
            <person name="Murray J."/>
            <person name="Woessner J.P."/>
            <person name="Wendl M.C."/>
            <person name="Yang S.-P."/>
            <person name="Schultz B.R."/>
            <person name="Wallis J.W."/>
            <person name="Spieth J."/>
            <person name="Bieri T.A."/>
            <person name="Nelson J.O."/>
            <person name="Berkowicz N."/>
            <person name="Wohldmann P.E."/>
            <person name="Cook L.L."/>
            <person name="Hickenbotham M.T."/>
            <person name="Eldred J."/>
            <person name="Williams D."/>
            <person name="Bedell J.A."/>
            <person name="Mardis E.R."/>
            <person name="Clifton S.W."/>
            <person name="Chissoe S.L."/>
            <person name="Marra M.A."/>
            <person name="Raymond C."/>
            <person name="Haugen E."/>
            <person name="Gillett W."/>
            <person name="Zhou Y."/>
            <person name="James R."/>
            <person name="Phelps K."/>
            <person name="Iadanoto S."/>
            <person name="Bubb K."/>
            <person name="Simms E."/>
            <person name="Levy R."/>
            <person name="Clendenning J."/>
            <person name="Kaul R."/>
            <person name="Kent W.J."/>
            <person name="Furey T.S."/>
            <person name="Baertsch R.A."/>
            <person name="Brent M.R."/>
            <person name="Keibler E."/>
            <person name="Flicek P."/>
            <person name="Bork P."/>
            <person name="Suyama M."/>
            <person name="Bailey J.A."/>
            <person name="Portnoy M.E."/>
            <person name="Torrents D."/>
            <person name="Chinwalla A.T."/>
            <person name="Gish W.R."/>
            <person name="Eddy S.R."/>
            <person name="McPherson J.D."/>
            <person name="Olson M.V."/>
            <person name="Eichler E.E."/>
            <person name="Green E.D."/>
            <person name="Waterston R.H."/>
            <person name="Wilson R.K."/>
        </authorList>
    </citation>
    <scope>NUCLEOTIDE SEQUENCE [LARGE SCALE GENOMIC DNA]</scope>
</reference>
<reference key="6">
    <citation type="journal article" date="2003" name="Science">
        <title>Human chromosome 7: DNA sequence and biology.</title>
        <authorList>
            <person name="Scherer S.W."/>
            <person name="Cheung J."/>
            <person name="MacDonald J.R."/>
            <person name="Osborne L.R."/>
            <person name="Nakabayashi K."/>
            <person name="Herbrick J.-A."/>
            <person name="Carson A.R."/>
            <person name="Parker-Katiraee L."/>
            <person name="Skaug J."/>
            <person name="Khaja R."/>
            <person name="Zhang J."/>
            <person name="Hudek A.K."/>
            <person name="Li M."/>
            <person name="Haddad M."/>
            <person name="Duggan G.E."/>
            <person name="Fernandez B.A."/>
            <person name="Kanematsu E."/>
            <person name="Gentles S."/>
            <person name="Christopoulos C.C."/>
            <person name="Choufani S."/>
            <person name="Kwasnicka D."/>
            <person name="Zheng X.H."/>
            <person name="Lai Z."/>
            <person name="Nusskern D.R."/>
            <person name="Zhang Q."/>
            <person name="Gu Z."/>
            <person name="Lu F."/>
            <person name="Zeesman S."/>
            <person name="Nowaczyk M.J."/>
            <person name="Teshima I."/>
            <person name="Chitayat D."/>
            <person name="Shuman C."/>
            <person name="Weksberg R."/>
            <person name="Zackai E.H."/>
            <person name="Grebe T.A."/>
            <person name="Cox S.R."/>
            <person name="Kirkpatrick S.J."/>
            <person name="Rahman N."/>
            <person name="Friedman J.M."/>
            <person name="Heng H.H.Q."/>
            <person name="Pelicci P.G."/>
            <person name="Lo-Coco F."/>
            <person name="Belloni E."/>
            <person name="Shaffer L.G."/>
            <person name="Pober B."/>
            <person name="Morton C.C."/>
            <person name="Gusella J.F."/>
            <person name="Bruns G.A.P."/>
            <person name="Korf B.R."/>
            <person name="Quade B.J."/>
            <person name="Ligon A.H."/>
            <person name="Ferguson H."/>
            <person name="Higgins A.W."/>
            <person name="Leach N.T."/>
            <person name="Herrick S.R."/>
            <person name="Lemyre E."/>
            <person name="Farra C.G."/>
            <person name="Kim H.-G."/>
            <person name="Summers A.M."/>
            <person name="Gripp K.W."/>
            <person name="Roberts W."/>
            <person name="Szatmari P."/>
            <person name="Winsor E.J.T."/>
            <person name="Grzeschik K.-H."/>
            <person name="Teebi A."/>
            <person name="Minassian B.A."/>
            <person name="Kere J."/>
            <person name="Armengol L."/>
            <person name="Pujana M.A."/>
            <person name="Estivill X."/>
            <person name="Wilson M.D."/>
            <person name="Koop B.F."/>
            <person name="Tosi S."/>
            <person name="Moore G.E."/>
            <person name="Boright A.P."/>
            <person name="Zlotorynski E."/>
            <person name="Kerem B."/>
            <person name="Kroisel P.M."/>
            <person name="Petek E."/>
            <person name="Oscier D.G."/>
            <person name="Mould S.J."/>
            <person name="Doehner H."/>
            <person name="Doehner K."/>
            <person name="Rommens J.M."/>
            <person name="Vincent J.B."/>
            <person name="Venter J.C."/>
            <person name="Li P.W."/>
            <person name="Mural R.J."/>
            <person name="Adams M.D."/>
            <person name="Tsui L.-C."/>
        </authorList>
    </citation>
    <scope>NUCLEOTIDE SEQUENCE [LARGE SCALE GENOMIC DNA]</scope>
</reference>
<reference key="7">
    <citation type="submission" date="2005-07" db="EMBL/GenBank/DDBJ databases">
        <authorList>
            <person name="Mural R.J."/>
            <person name="Istrail S."/>
            <person name="Sutton G.G."/>
            <person name="Florea L."/>
            <person name="Halpern A.L."/>
            <person name="Mobarry C.M."/>
            <person name="Lippert R."/>
            <person name="Walenz B."/>
            <person name="Shatkay H."/>
            <person name="Dew I."/>
            <person name="Miller J.R."/>
            <person name="Flanigan M.J."/>
            <person name="Edwards N.J."/>
            <person name="Bolanos R."/>
            <person name="Fasulo D."/>
            <person name="Halldorsson B.V."/>
            <person name="Hannenhalli S."/>
            <person name="Turner R."/>
            <person name="Yooseph S."/>
            <person name="Lu F."/>
            <person name="Nusskern D.R."/>
            <person name="Shue B.C."/>
            <person name="Zheng X.H."/>
            <person name="Zhong F."/>
            <person name="Delcher A.L."/>
            <person name="Huson D.H."/>
            <person name="Kravitz S.A."/>
            <person name="Mouchard L."/>
            <person name="Reinert K."/>
            <person name="Remington K.A."/>
            <person name="Clark A.G."/>
            <person name="Waterman M.S."/>
            <person name="Eichler E.E."/>
            <person name="Adams M.D."/>
            <person name="Hunkapiller M.W."/>
            <person name="Myers E.W."/>
            <person name="Venter J.C."/>
        </authorList>
    </citation>
    <scope>NUCLEOTIDE SEQUENCE [LARGE SCALE GENOMIC DNA]</scope>
</reference>
<reference key="8">
    <citation type="journal article" date="2004" name="Genome Res.">
        <title>The status, quality, and expansion of the NIH full-length cDNA project: the Mammalian Gene Collection (MGC).</title>
        <authorList>
            <consortium name="The MGC Project Team"/>
        </authorList>
    </citation>
    <scope>NUCLEOTIDE SEQUENCE [LARGE SCALE MRNA] (ISOFORMS 1 AND 2)</scope>
    <source>
        <tissue>Eye</tissue>
        <tissue>Lung</tissue>
        <tissue>Muscle</tissue>
    </source>
</reference>
<reference key="9">
    <citation type="journal article" date="2007" name="BMC Genomics">
        <title>The full-ORF clone resource of the German cDNA consortium.</title>
        <authorList>
            <person name="Bechtel S."/>
            <person name="Rosenfelder H."/>
            <person name="Duda A."/>
            <person name="Schmidt C.P."/>
            <person name="Ernst U."/>
            <person name="Wellenreuther R."/>
            <person name="Mehrle A."/>
            <person name="Schuster C."/>
            <person name="Bahr A."/>
            <person name="Bloecker H."/>
            <person name="Heubner D."/>
            <person name="Hoerlein A."/>
            <person name="Michel G."/>
            <person name="Wedler H."/>
            <person name="Koehrer K."/>
            <person name="Ottenwaelder B."/>
            <person name="Poustka A."/>
            <person name="Wiemann S."/>
            <person name="Schupp I."/>
        </authorList>
    </citation>
    <scope>NUCLEOTIDE SEQUENCE [LARGE SCALE MRNA] OF 253-454 (ISOFORM 1)</scope>
    <source>
        <tissue>Melanoma</tissue>
    </source>
</reference>
<reference key="10">
    <citation type="journal article" date="2006" name="Cell">
        <title>Global, in vivo, and site-specific phosphorylation dynamics in signaling networks.</title>
        <authorList>
            <person name="Olsen J.V."/>
            <person name="Blagoev B."/>
            <person name="Gnad F."/>
            <person name="Macek B."/>
            <person name="Kumar C."/>
            <person name="Mortensen P."/>
            <person name="Mann M."/>
        </authorList>
    </citation>
    <scope>IDENTIFICATION BY MASS SPECTROMETRY [LARGE SCALE ANALYSIS]</scope>
    <source>
        <tissue>Cervix carcinoma</tissue>
    </source>
</reference>
<reference key="11">
    <citation type="journal article" date="2006" name="J. Cell Sci.">
        <title>Transcriptional co-activator p75 binds and tethers the Myc-interacting protein JPO2 to chromatin.</title>
        <authorList>
            <person name="Maertens G.N."/>
            <person name="Cherepanov P."/>
            <person name="Engelman A."/>
        </authorList>
    </citation>
    <scope>IDENTIFICATION BY MASS SPECTROMETRY</scope>
    <scope>INTERACTION WITH PSIP1</scope>
    <scope>REGION</scope>
</reference>
<reference key="12">
    <citation type="journal article" date="2006" name="J. Biol. Chem.">
        <title>Glucocorticoid and androgen activation of monoamine oxidase A is regulated differently by R1 and Sp1.</title>
        <authorList>
            <person name="Ou X.-M."/>
            <person name="Chen K."/>
            <person name="Shih J.C."/>
        </authorList>
    </citation>
    <scope>SUBCELLULAR LOCATION</scope>
</reference>
<reference key="13">
    <citation type="journal article" date="2006" name="Proc. Natl. Acad. Sci. U.S.A.">
        <title>Monoamine oxidase A and repressor R1 are involved in apoptotic signaling pathway.</title>
        <authorList>
            <person name="Ou X.-M."/>
            <person name="Chen K."/>
            <person name="Shih J.C."/>
        </authorList>
    </citation>
    <scope>FUNCTION</scope>
    <scope>INTERACTION WITH MYC</scope>
</reference>
<reference key="14">
    <citation type="journal article" date="2008" name="J. Proteome Res.">
        <title>Combining protein-based IMAC, peptide-based IMAC, and MudPIT for efficient phosphoproteomic analysis.</title>
        <authorList>
            <person name="Cantin G.T."/>
            <person name="Yi W."/>
            <person name="Lu B."/>
            <person name="Park S.K."/>
            <person name="Xu T."/>
            <person name="Lee J.-D."/>
            <person name="Yates J.R. III"/>
        </authorList>
    </citation>
    <scope>PHOSPHORYLATION [LARGE SCALE ANALYSIS] AT SER-21</scope>
    <scope>IDENTIFICATION BY MASS SPECTROMETRY [LARGE SCALE ANALYSIS]</scope>
    <source>
        <tissue>Cervix carcinoma</tissue>
    </source>
</reference>
<reference key="15">
    <citation type="journal article" date="2008" name="Proc. Natl. Acad. Sci. U.S.A.">
        <title>A quantitative atlas of mitotic phosphorylation.</title>
        <authorList>
            <person name="Dephoure N."/>
            <person name="Zhou C."/>
            <person name="Villen J."/>
            <person name="Beausoleil S.A."/>
            <person name="Bakalarski C.E."/>
            <person name="Elledge S.J."/>
            <person name="Gygi S.P."/>
        </authorList>
    </citation>
    <scope>PHOSPHORYLATION [LARGE SCALE ANALYSIS] AT SER-117 AND SER-261</scope>
    <scope>IDENTIFICATION BY MASS SPECTROMETRY [LARGE SCALE ANALYSIS]</scope>
    <source>
        <tissue>Cervix carcinoma</tissue>
    </source>
</reference>
<reference key="16">
    <citation type="journal article" date="2009" name="Sci. Signal.">
        <title>Quantitative phosphoproteomic analysis of T cell receptor signaling reveals system-wide modulation of protein-protein interactions.</title>
        <authorList>
            <person name="Mayya V."/>
            <person name="Lundgren D.H."/>
            <person name="Hwang S.-I."/>
            <person name="Rezaul K."/>
            <person name="Wu L."/>
            <person name="Eng J.K."/>
            <person name="Rodionov V."/>
            <person name="Han D.K."/>
        </authorList>
    </citation>
    <scope>PHOSPHORYLATION [LARGE SCALE ANALYSIS] AT SER-105; SER-108; SER-117 AND SER-162</scope>
    <scope>IDENTIFICATION BY MASS SPECTROMETRY [LARGE SCALE ANALYSIS]</scope>
    <source>
        <tissue>Leukemic T-cell</tissue>
    </source>
</reference>
<reference key="17">
    <citation type="journal article" date="2010" name="Sci. Signal.">
        <title>Quantitative phosphoproteomics reveals widespread full phosphorylation site occupancy during mitosis.</title>
        <authorList>
            <person name="Olsen J.V."/>
            <person name="Vermeulen M."/>
            <person name="Santamaria A."/>
            <person name="Kumar C."/>
            <person name="Miller M.L."/>
            <person name="Jensen L.J."/>
            <person name="Gnad F."/>
            <person name="Cox J."/>
            <person name="Jensen T.S."/>
            <person name="Nigg E.A."/>
            <person name="Brunak S."/>
            <person name="Mann M."/>
        </authorList>
    </citation>
    <scope>PHOSPHORYLATION [LARGE SCALE ANALYSIS] AT SER-21; THR-77; SER-79; SER-117; SER-139 AND SER-162</scope>
    <scope>IDENTIFICATION BY MASS SPECTROMETRY [LARGE SCALE ANALYSIS]</scope>
    <source>
        <tissue>Cervix carcinoma</tissue>
    </source>
</reference>
<reference key="18">
    <citation type="journal article" date="2011" name="Sci. Signal.">
        <title>System-wide temporal characterization of the proteome and phosphoproteome of human embryonic stem cell differentiation.</title>
        <authorList>
            <person name="Rigbolt K.T."/>
            <person name="Prokhorova T.A."/>
            <person name="Akimov V."/>
            <person name="Henningsen J."/>
            <person name="Johansen P.T."/>
            <person name="Kratchmarova I."/>
            <person name="Kassem M."/>
            <person name="Mann M."/>
            <person name="Olsen J.V."/>
            <person name="Blagoev B."/>
        </authorList>
    </citation>
    <scope>PHOSPHORYLATION [LARGE SCALE ANALYSIS] AT SER-21; THR-77; SER-79; SER-105; SER-108; SER-117; SER-138; SER-139; SER-162 AND SER-261</scope>
    <scope>IDENTIFICATION BY MASS SPECTROMETRY [LARGE SCALE ANALYSIS]</scope>
</reference>
<reference key="19">
    <citation type="journal article" date="2013" name="J. Proteome Res.">
        <title>Toward a comprehensive characterization of a human cancer cell phosphoproteome.</title>
        <authorList>
            <person name="Zhou H."/>
            <person name="Di Palma S."/>
            <person name="Preisinger C."/>
            <person name="Peng M."/>
            <person name="Polat A.N."/>
            <person name="Heck A.J."/>
            <person name="Mohammed S."/>
        </authorList>
    </citation>
    <scope>PHOSPHORYLATION [LARGE SCALE ANALYSIS] AT SER-117 AND SER-261</scope>
    <scope>IDENTIFICATION BY MASS SPECTROMETRY [LARGE SCALE ANALYSIS]</scope>
    <source>
        <tissue>Cervix carcinoma</tissue>
    </source>
</reference>
<reference key="20">
    <citation type="journal article" date="2014" name="Cancer Res.">
        <title>Validation and structural characterization of the LEDGF/p75-MLL interface as a new target for the treatment of MLL-dependent leukemia.</title>
        <authorList>
            <person name="Cermakova K."/>
            <person name="Tesina P."/>
            <person name="Demeulemeester J."/>
            <person name="El Ashkar S."/>
            <person name="Mereau H."/>
            <person name="Schwaller J."/>
            <person name="Rezacova P."/>
            <person name="Veverka V."/>
            <person name="De Rijck J."/>
        </authorList>
    </citation>
    <scope>INTERACTION WITH PSIP1</scope>
</reference>
<reference key="21">
    <citation type="journal article" date="2017" name="Nat. Struct. Mol. Biol.">
        <title>Site-specific mapping of the human SUMO proteome reveals co-modification with phosphorylation.</title>
        <authorList>
            <person name="Hendriks I.A."/>
            <person name="Lyon D."/>
            <person name="Young C."/>
            <person name="Jensen L.J."/>
            <person name="Vertegaal A.C."/>
            <person name="Nielsen M.L."/>
        </authorList>
    </citation>
    <scope>SUMOYLATION [LARGE SCALE ANALYSIS] AT LYS-222 AND LYS-225</scope>
    <scope>IDENTIFICATION BY MASS SPECTROMETRY [LARGE SCALE ANALYSIS]</scope>
</reference>
<reference evidence="14 15" key="22">
    <citation type="journal article" date="2018" name="Proc. Natl. Acad. Sci. U.S.A.">
        <title>Affinity switching of the LEDGF/p75 IBD interactome is governed by kinase-dependent phosphorylation.</title>
        <authorList>
            <person name="Sharma S."/>
            <person name="Cermakova K."/>
            <person name="De Rijck J."/>
            <person name="Demeulemeester J."/>
            <person name="Fabry M."/>
            <person name="El Ashkar S."/>
            <person name="Van Belle S."/>
            <person name="Lepsik M."/>
            <person name="Tesina P."/>
            <person name="Duchoslav V."/>
            <person name="Novak P."/>
            <person name="Hubalek M."/>
            <person name="Srb P."/>
            <person name="Christ F."/>
            <person name="Rezacova P."/>
            <person name="Hodges H.C."/>
            <person name="Debyser Z."/>
            <person name="Veverka V."/>
        </authorList>
    </citation>
    <scope>STRUCTURE BY NMR OF 1-32 AND 56-91 IN COMPLEX WITH PSIP1</scope>
    <scope>INTERACTION WITH PSIP1</scope>
    <scope>DOMAIN IBM MOTIF</scope>
    <scope>MUTAGENESIS OF ILE-16; PHE-17; SER-21; ILE-72; PHE-73; THR-77; SER-79 AND THR-81</scope>
    <scope>PHOSPHORYLATION AT SER-21; THR-77; SER-79; THR-81 AND THR-88</scope>
</reference>
<reference key="23">
    <citation type="journal article" date="2018" name="Am. J. Hum. Genet.">
        <title>De Novo Truncating Mutations in WASF1 Cause Intellectual Disability with Seizures.</title>
        <authorList>
            <consortium name="NIHR BioResource"/>
            <consortium name="Care4Rare Canada Consortium"/>
            <person name="Ito Y."/>
            <person name="Carss K.J."/>
            <person name="Duarte S.T."/>
            <person name="Hartley T."/>
            <person name="Keren B."/>
            <person name="Kurian M.A."/>
            <person name="Marey I."/>
            <person name="Charles P."/>
            <person name="Mendonca C."/>
            <person name="Nava C."/>
            <person name="Pfundt R."/>
            <person name="Sanchis-Juan A."/>
            <person name="van Bokhoven H."/>
            <person name="van Essen A."/>
            <person name="van Ravenswaaij-Arts C."/>
            <person name="Boycott K.M."/>
            <person name="Kernohan K.D."/>
            <person name="Dyack S."/>
            <person name="Raymond F.L."/>
        </authorList>
    </citation>
    <scope>VARIANT ASN-45</scope>
</reference>
<protein>
    <recommendedName>
        <fullName>Cell division cycle-associated 7-like protein</fullName>
    </recommendedName>
    <alternativeName>
        <fullName>Protein JPO2</fullName>
    </alternativeName>
    <alternativeName>
        <fullName>Transcription factor RAM2</fullName>
    </alternativeName>
</protein>
<keyword id="KW-0002">3D-structure</keyword>
<keyword id="KW-0025">Alternative splicing</keyword>
<keyword id="KW-0963">Cytoplasm</keyword>
<keyword id="KW-1017">Isopeptide bond</keyword>
<keyword id="KW-0539">Nucleus</keyword>
<keyword id="KW-0597">Phosphoprotein</keyword>
<keyword id="KW-1267">Proteomics identification</keyword>
<keyword id="KW-1185">Reference proteome</keyword>
<keyword id="KW-0678">Repressor</keyword>
<keyword id="KW-0804">Transcription</keyword>
<keyword id="KW-0805">Transcription regulation</keyword>
<keyword id="KW-0832">Ubl conjugation</keyword>
<name>CDA7L_HUMAN</name>
<evidence type="ECO:0000250" key="1">
    <source>
        <dbReference type="UniProtKB" id="Q922M5"/>
    </source>
</evidence>
<evidence type="ECO:0000256" key="2">
    <source>
        <dbReference type="SAM" id="MobiDB-lite"/>
    </source>
</evidence>
<evidence type="ECO:0000269" key="3">
    <source>
    </source>
</evidence>
<evidence type="ECO:0000269" key="4">
    <source>
    </source>
</evidence>
<evidence type="ECO:0000269" key="5">
    <source>
    </source>
</evidence>
<evidence type="ECO:0000269" key="6">
    <source>
    </source>
</evidence>
<evidence type="ECO:0000269" key="7">
    <source>
    </source>
</evidence>
<evidence type="ECO:0000269" key="8">
    <source>
    </source>
</evidence>
<evidence type="ECO:0000269" key="9">
    <source>
    </source>
</evidence>
<evidence type="ECO:0000303" key="10">
    <source>
    </source>
</evidence>
<evidence type="ECO:0000303" key="11">
    <source>
    </source>
</evidence>
<evidence type="ECO:0000303" key="12">
    <source ref="3"/>
</evidence>
<evidence type="ECO:0000305" key="13"/>
<evidence type="ECO:0007744" key="14">
    <source>
        <dbReference type="PDB" id="5YI9"/>
    </source>
</evidence>
<evidence type="ECO:0007744" key="15">
    <source>
        <dbReference type="PDB" id="6EMO"/>
    </source>
</evidence>
<evidence type="ECO:0007744" key="16">
    <source>
    </source>
</evidence>
<evidence type="ECO:0007744" key="17">
    <source>
    </source>
</evidence>
<evidence type="ECO:0007744" key="18">
    <source>
    </source>
</evidence>
<evidence type="ECO:0007744" key="19">
    <source>
    </source>
</evidence>
<evidence type="ECO:0007744" key="20">
    <source>
    </source>
</evidence>
<evidence type="ECO:0007744" key="21">
    <source>
    </source>
</evidence>
<evidence type="ECO:0007744" key="22">
    <source>
    </source>
</evidence>
<evidence type="ECO:0007829" key="23">
    <source>
        <dbReference type="PDB" id="5YI9"/>
    </source>
</evidence>
<evidence type="ECO:0007829" key="24">
    <source>
        <dbReference type="PDB" id="6EMO"/>
    </source>
</evidence>
<organism>
    <name type="scientific">Homo sapiens</name>
    <name type="common">Human</name>
    <dbReference type="NCBI Taxonomy" id="9606"/>
    <lineage>
        <taxon>Eukaryota</taxon>
        <taxon>Metazoa</taxon>
        <taxon>Chordata</taxon>
        <taxon>Craniata</taxon>
        <taxon>Vertebrata</taxon>
        <taxon>Euteleostomi</taxon>
        <taxon>Mammalia</taxon>
        <taxon>Eutheria</taxon>
        <taxon>Euarchontoglires</taxon>
        <taxon>Primates</taxon>
        <taxon>Haplorrhini</taxon>
        <taxon>Catarrhini</taxon>
        <taxon>Hominidae</taxon>
        <taxon>Homo</taxon>
    </lineage>
</organism>
<proteinExistence type="evidence at protein level"/>
<dbReference type="EMBL" id="AY161168">
    <property type="protein sequence ID" value="AAO17570.1"/>
    <property type="molecule type" value="mRNA"/>
</dbReference>
<dbReference type="EMBL" id="AY161169">
    <property type="protein sequence ID" value="AAO17571.1"/>
    <property type="molecule type" value="mRNA"/>
</dbReference>
<dbReference type="EMBL" id="AK022955">
    <property type="protein sequence ID" value="BAB14330.1"/>
    <property type="status" value="ALT_FRAME"/>
    <property type="molecule type" value="mRNA"/>
</dbReference>
<dbReference type="EMBL" id="AK095965">
    <property type="protein sequence ID" value="BAG53177.1"/>
    <property type="molecule type" value="mRNA"/>
</dbReference>
<dbReference type="EMBL" id="AK300781">
    <property type="protein sequence ID" value="BAG62445.1"/>
    <property type="molecule type" value="mRNA"/>
</dbReference>
<dbReference type="EMBL" id="AC074379">
    <property type="status" value="NOT_ANNOTATED_CDS"/>
    <property type="molecule type" value="Genomic_DNA"/>
</dbReference>
<dbReference type="EMBL" id="AC099653">
    <property type="status" value="NOT_ANNOTATED_CDS"/>
    <property type="molecule type" value="Genomic_DNA"/>
</dbReference>
<dbReference type="EMBL" id="CH236948">
    <property type="protein sequence ID" value="EAL24271.1"/>
    <property type="molecule type" value="Genomic_DNA"/>
</dbReference>
<dbReference type="EMBL" id="CH471073">
    <property type="protein sequence ID" value="EAW93741.1"/>
    <property type="molecule type" value="Genomic_DNA"/>
</dbReference>
<dbReference type="EMBL" id="CH471073">
    <property type="protein sequence ID" value="EAW93743.1"/>
    <property type="molecule type" value="Genomic_DNA"/>
</dbReference>
<dbReference type="EMBL" id="BC009352">
    <property type="protein sequence ID" value="AAH09352.2"/>
    <property type="molecule type" value="mRNA"/>
</dbReference>
<dbReference type="EMBL" id="BC014630">
    <property type="protein sequence ID" value="AAH14630.2"/>
    <property type="molecule type" value="mRNA"/>
</dbReference>
<dbReference type="EMBL" id="BC025242">
    <property type="protein sequence ID" value="AAH25242.1"/>
    <property type="molecule type" value="mRNA"/>
</dbReference>
<dbReference type="EMBL" id="BC032576">
    <property type="protein sequence ID" value="AAH32576.1"/>
    <property type="molecule type" value="mRNA"/>
</dbReference>
<dbReference type="EMBL" id="BC039823">
    <property type="protein sequence ID" value="AAH39823.1"/>
    <property type="molecule type" value="mRNA"/>
</dbReference>
<dbReference type="EMBL" id="AL359619">
    <property type="protein sequence ID" value="CAB94887.1"/>
    <property type="molecule type" value="mRNA"/>
</dbReference>
<dbReference type="CCDS" id="CCDS47558.1">
    <molecule id="Q96GN5-5"/>
</dbReference>
<dbReference type="CCDS" id="CCDS47559.1">
    <molecule id="Q96GN5-4"/>
</dbReference>
<dbReference type="CCDS" id="CCDS5374.1">
    <molecule id="Q96GN5-1"/>
</dbReference>
<dbReference type="PIR" id="T50635">
    <property type="entry name" value="T50635"/>
</dbReference>
<dbReference type="RefSeq" id="NP_001120842.1">
    <molecule id="Q96GN5-4"/>
    <property type="nucleotide sequence ID" value="NM_001127370.3"/>
</dbReference>
<dbReference type="RefSeq" id="NP_001120843.1">
    <molecule id="Q96GN5-5"/>
    <property type="nucleotide sequence ID" value="NM_001127371.3"/>
</dbReference>
<dbReference type="RefSeq" id="NP_061189.2">
    <molecule id="Q96GN5-1"/>
    <property type="nucleotide sequence ID" value="NM_018719.4"/>
</dbReference>
<dbReference type="PDB" id="5YI9">
    <property type="method" value="NMR"/>
    <property type="chains" value="A=56-91"/>
</dbReference>
<dbReference type="PDB" id="6EMO">
    <property type="method" value="NMR"/>
    <property type="chains" value="A=1-32"/>
</dbReference>
<dbReference type="PDBsum" id="5YI9"/>
<dbReference type="PDBsum" id="6EMO"/>
<dbReference type="SMR" id="Q96GN5"/>
<dbReference type="BioGRID" id="120705">
    <property type="interactions" value="91"/>
</dbReference>
<dbReference type="DIP" id="DIP-61218N"/>
<dbReference type="FunCoup" id="Q96GN5">
    <property type="interactions" value="2927"/>
</dbReference>
<dbReference type="IntAct" id="Q96GN5">
    <property type="interactions" value="80"/>
</dbReference>
<dbReference type="MINT" id="Q96GN5"/>
<dbReference type="STRING" id="9606.ENSP00000383986"/>
<dbReference type="iPTMnet" id="Q96GN5"/>
<dbReference type="PhosphoSitePlus" id="Q96GN5"/>
<dbReference type="BioMuta" id="CDCA7L"/>
<dbReference type="DMDM" id="74751890"/>
<dbReference type="jPOST" id="Q96GN5"/>
<dbReference type="MassIVE" id="Q96GN5"/>
<dbReference type="PaxDb" id="9606-ENSP00000383986"/>
<dbReference type="PeptideAtlas" id="Q96GN5"/>
<dbReference type="ProteomicsDB" id="12602"/>
<dbReference type="ProteomicsDB" id="76648">
    <molecule id="Q96GN5-1"/>
</dbReference>
<dbReference type="ProteomicsDB" id="76649">
    <molecule id="Q96GN5-2"/>
</dbReference>
<dbReference type="ProteomicsDB" id="76650">
    <molecule id="Q96GN5-4"/>
</dbReference>
<dbReference type="Pumba" id="Q96GN5"/>
<dbReference type="Antibodypedia" id="11993">
    <property type="antibodies" value="254 antibodies from 25 providers"/>
</dbReference>
<dbReference type="DNASU" id="55536"/>
<dbReference type="Ensembl" id="ENST00000356195.9">
    <molecule id="Q96GN5-4"/>
    <property type="protein sequence ID" value="ENSP00000348523.5"/>
    <property type="gene ID" value="ENSG00000164649.20"/>
</dbReference>
<dbReference type="Ensembl" id="ENST00000373934.4">
    <molecule id="Q96GN5-5"/>
    <property type="protein sequence ID" value="ENSP00000363045.4"/>
    <property type="gene ID" value="ENSG00000164649.20"/>
</dbReference>
<dbReference type="Ensembl" id="ENST00000406877.8">
    <molecule id="Q96GN5-1"/>
    <property type="protein sequence ID" value="ENSP00000383986.3"/>
    <property type="gene ID" value="ENSG00000164649.20"/>
</dbReference>
<dbReference type="GeneID" id="55536"/>
<dbReference type="KEGG" id="hsa:55536"/>
<dbReference type="MANE-Select" id="ENST00000406877.8">
    <property type="protein sequence ID" value="ENSP00000383986.3"/>
    <property type="RefSeq nucleotide sequence ID" value="NM_018719.5"/>
    <property type="RefSeq protein sequence ID" value="NP_061189.2"/>
</dbReference>
<dbReference type="UCSC" id="uc003sve.5">
    <molecule id="Q96GN5-1"/>
    <property type="organism name" value="human"/>
</dbReference>
<dbReference type="AGR" id="HGNC:30777"/>
<dbReference type="CTD" id="55536"/>
<dbReference type="DisGeNET" id="55536"/>
<dbReference type="GeneCards" id="CDCA7L"/>
<dbReference type="HGNC" id="HGNC:30777">
    <property type="gene designation" value="CDCA7L"/>
</dbReference>
<dbReference type="HPA" id="ENSG00000164649">
    <property type="expression patterns" value="Tissue enhanced (bone)"/>
</dbReference>
<dbReference type="MalaCards" id="CDCA7L"/>
<dbReference type="MIM" id="609685">
    <property type="type" value="gene"/>
</dbReference>
<dbReference type="neXtProt" id="NX_Q96GN5"/>
<dbReference type="OpenTargets" id="ENSG00000164649"/>
<dbReference type="PharmGKB" id="PA142672139"/>
<dbReference type="VEuPathDB" id="HostDB:ENSG00000164649"/>
<dbReference type="eggNOG" id="ENOG502QWH1">
    <property type="taxonomic scope" value="Eukaryota"/>
</dbReference>
<dbReference type="GeneTree" id="ENSGT00940000159108"/>
<dbReference type="HOGENOM" id="CLU_035988_0_0_1"/>
<dbReference type="InParanoid" id="Q96GN5"/>
<dbReference type="OMA" id="DPAWICP"/>
<dbReference type="OrthoDB" id="298344at2759"/>
<dbReference type="PAN-GO" id="Q96GN5">
    <property type="GO annotations" value="1 GO annotation based on evolutionary models"/>
</dbReference>
<dbReference type="PhylomeDB" id="Q96GN5"/>
<dbReference type="TreeFam" id="TF101076"/>
<dbReference type="PathwayCommons" id="Q96GN5"/>
<dbReference type="SignaLink" id="Q96GN5"/>
<dbReference type="SIGNOR" id="Q96GN5"/>
<dbReference type="BioGRID-ORCS" id="55536">
    <property type="hits" value="10 hits in 1161 CRISPR screens"/>
</dbReference>
<dbReference type="ChiTaRS" id="CDCA7L">
    <property type="organism name" value="human"/>
</dbReference>
<dbReference type="GeneWiki" id="CDCA7L"/>
<dbReference type="GenomeRNAi" id="55536"/>
<dbReference type="Pharos" id="Q96GN5">
    <property type="development level" value="Tbio"/>
</dbReference>
<dbReference type="PRO" id="PR:Q96GN5"/>
<dbReference type="Proteomes" id="UP000005640">
    <property type="component" value="Chromosome 7"/>
</dbReference>
<dbReference type="RNAct" id="Q96GN5">
    <property type="molecule type" value="protein"/>
</dbReference>
<dbReference type="Bgee" id="ENSG00000164649">
    <property type="expression patterns" value="Expressed in germinal epithelium of ovary and 172 other cell types or tissues"/>
</dbReference>
<dbReference type="ExpressionAtlas" id="Q96GN5">
    <property type="expression patterns" value="baseline and differential"/>
</dbReference>
<dbReference type="GO" id="GO:0005829">
    <property type="term" value="C:cytosol"/>
    <property type="evidence" value="ECO:0000314"/>
    <property type="project" value="HPA"/>
</dbReference>
<dbReference type="GO" id="GO:0001650">
    <property type="term" value="C:fibrillar center"/>
    <property type="evidence" value="ECO:0000314"/>
    <property type="project" value="HPA"/>
</dbReference>
<dbReference type="GO" id="GO:0005730">
    <property type="term" value="C:nucleolus"/>
    <property type="evidence" value="ECO:0000314"/>
    <property type="project" value="HPA"/>
</dbReference>
<dbReference type="GO" id="GO:0005654">
    <property type="term" value="C:nucleoplasm"/>
    <property type="evidence" value="ECO:0000314"/>
    <property type="project" value="HPA"/>
</dbReference>
<dbReference type="GO" id="GO:0005634">
    <property type="term" value="C:nucleus"/>
    <property type="evidence" value="ECO:0000314"/>
    <property type="project" value="MGI"/>
</dbReference>
<dbReference type="GO" id="GO:0008284">
    <property type="term" value="P:positive regulation of cell population proliferation"/>
    <property type="evidence" value="ECO:0000314"/>
    <property type="project" value="MGI"/>
</dbReference>
<dbReference type="GO" id="GO:0006355">
    <property type="term" value="P:regulation of DNA-templated transcription"/>
    <property type="evidence" value="ECO:0007669"/>
    <property type="project" value="InterPro"/>
</dbReference>
<dbReference type="InterPro" id="IPR040221">
    <property type="entry name" value="CDCA7/CDA7L"/>
</dbReference>
<dbReference type="InterPro" id="IPR018866">
    <property type="entry name" value="Znf-4CXXC_R1"/>
</dbReference>
<dbReference type="PANTHER" id="PTHR31169:SF4">
    <property type="entry name" value="CELL DIVISION CYCLE-ASSOCIATED 7-LIKE PROTEIN"/>
    <property type="match status" value="1"/>
</dbReference>
<dbReference type="PANTHER" id="PTHR31169">
    <property type="entry name" value="OS05G0300700 PROTEIN"/>
    <property type="match status" value="1"/>
</dbReference>
<dbReference type="Pfam" id="PF10497">
    <property type="entry name" value="zf-4CXXC_R1"/>
    <property type="match status" value="1"/>
</dbReference>